<gene>
    <name type="primary">agn1</name>
    <name evidence="3" type="ORF">SPAC14C4.09</name>
</gene>
<comment type="function">
    <text evidence="1">Has a role in cell separation where it is required for the degradation of the cell wall material surrounding the septum (the septum edging) which must be hydrolyzed before full separation of the daughter cells can occur. Hydrolyzes 1,3-alpha-glucan predominantly into pentasaccharides.</text>
</comment>
<comment type="catalytic activity">
    <reaction>
        <text>Endohydrolysis of (1-&gt;3)-alpha-D-glucosidic linkages in isolichenin, pseudonigeran and nigeran.</text>
        <dbReference type="EC" id="3.2.1.59"/>
    </reaction>
</comment>
<comment type="subunit">
    <text evidence="1">Monomer.</text>
</comment>
<comment type="subcellular location">
    <subcellularLocation>
        <location evidence="1">Secreted</location>
    </subcellularLocation>
    <subcellularLocation>
        <location evidence="1">Secreted</location>
        <location evidence="1">Cell wall</location>
    </subcellularLocation>
    <text>Associates with the cell wall.</text>
</comment>
<comment type="PTM">
    <text>Not glycosylated.</text>
</comment>
<comment type="similarity">
    <text evidence="2">Belongs to the glycosyl hydrolase 71 family.</text>
</comment>
<accession>O13716</accession>
<accession>A0AAN2H6B7</accession>
<accession>Q6F6J1</accession>
<accession>Q9USE2</accession>
<organism>
    <name type="scientific">Schizosaccharomyces pombe (strain 972 / ATCC 24843)</name>
    <name type="common">Fission yeast</name>
    <dbReference type="NCBI Taxonomy" id="284812"/>
    <lineage>
        <taxon>Eukaryota</taxon>
        <taxon>Fungi</taxon>
        <taxon>Dikarya</taxon>
        <taxon>Ascomycota</taxon>
        <taxon>Taphrinomycotina</taxon>
        <taxon>Schizosaccharomycetes</taxon>
        <taxon>Schizosaccharomycetales</taxon>
        <taxon>Schizosaccharomycetaceae</taxon>
        <taxon>Schizosaccharomyces</taxon>
    </lineage>
</organism>
<protein>
    <recommendedName>
        <fullName>Glucan endo-1,3-alpha-glucosidase agn1</fullName>
        <ecNumber>3.2.1.59</ecNumber>
    </recommendedName>
    <alternativeName>
        <fullName>Endo-1,3-alpha-glucanase agn1</fullName>
    </alternativeName>
</protein>
<keyword id="KW-0002">3D-structure</keyword>
<keyword id="KW-0131">Cell cycle</keyword>
<keyword id="KW-0132">Cell division</keyword>
<keyword id="KW-0134">Cell wall</keyword>
<keyword id="KW-0961">Cell wall biogenesis/degradation</keyword>
<keyword id="KW-0326">Glycosidase</keyword>
<keyword id="KW-0378">Hydrolase</keyword>
<keyword id="KW-1185">Reference proteome</keyword>
<keyword id="KW-0964">Secreted</keyword>
<keyword id="KW-0732">Signal</keyword>
<proteinExistence type="evidence at protein level"/>
<name>AGN1_SCHPO</name>
<dbReference type="EC" id="3.2.1.59"/>
<dbReference type="EMBL" id="AY626901">
    <property type="protein sequence ID" value="AAT84064.1"/>
    <property type="molecule type" value="mRNA"/>
</dbReference>
<dbReference type="EMBL" id="CU329670">
    <property type="protein sequence ID" value="CAK9839189.1"/>
    <property type="molecule type" value="Genomic_DNA"/>
</dbReference>
<dbReference type="EMBL" id="AB027828">
    <property type="protein sequence ID" value="BAA87132.1"/>
    <property type="molecule type" value="Genomic_DNA"/>
</dbReference>
<dbReference type="PIR" id="T37694">
    <property type="entry name" value="T37694"/>
</dbReference>
<dbReference type="PDB" id="8YFH">
    <property type="method" value="X-ray"/>
    <property type="resolution" value="1.80 A"/>
    <property type="chains" value="A/B/C=23-424"/>
</dbReference>
<dbReference type="PDBsum" id="8YFH"/>
<dbReference type="SMR" id="O13716"/>
<dbReference type="STRING" id="284812.O13716"/>
<dbReference type="CAZy" id="GH71">
    <property type="family name" value="Glycoside Hydrolase Family 71"/>
</dbReference>
<dbReference type="PaxDb" id="4896-SPAC14C4.09.1"/>
<dbReference type="EnsemblFungi" id="SPAC14C4.09.1">
    <property type="protein sequence ID" value="SPAC14C4.09.1:pep"/>
    <property type="gene ID" value="SPAC14C4.09"/>
</dbReference>
<dbReference type="PomBase" id="SPAC14C4.09">
    <property type="gene designation" value="agn1"/>
</dbReference>
<dbReference type="VEuPathDB" id="FungiDB:SPAC14C4.09"/>
<dbReference type="eggNOG" id="ENOG502RZ85">
    <property type="taxonomic scope" value="Eukaryota"/>
</dbReference>
<dbReference type="HOGENOM" id="CLU_019141_0_0_1"/>
<dbReference type="InParanoid" id="O13716"/>
<dbReference type="OMA" id="ITAYMQQ"/>
<dbReference type="PhylomeDB" id="O13716"/>
<dbReference type="PRO" id="PR:O13716"/>
<dbReference type="Proteomes" id="UP000002485">
    <property type="component" value="Chromosome I"/>
</dbReference>
<dbReference type="GO" id="GO:0005576">
    <property type="term" value="C:extracellular region"/>
    <property type="evidence" value="ECO:0000314"/>
    <property type="project" value="PomBase"/>
</dbReference>
<dbReference type="GO" id="GO:1990819">
    <property type="term" value="C:mating projection actin fusion focus"/>
    <property type="evidence" value="ECO:0000314"/>
    <property type="project" value="PomBase"/>
</dbReference>
<dbReference type="GO" id="GO:0043332">
    <property type="term" value="C:mating projection tip"/>
    <property type="evidence" value="ECO:0000314"/>
    <property type="project" value="PomBase"/>
</dbReference>
<dbReference type="GO" id="GO:0051118">
    <property type="term" value="F:glucan endo-1,3-alpha-glucosidase activity"/>
    <property type="evidence" value="ECO:0007669"/>
    <property type="project" value="InterPro"/>
</dbReference>
<dbReference type="GO" id="GO:0030995">
    <property type="term" value="P:cell septum edging catabolic process"/>
    <property type="evidence" value="ECO:0000315"/>
    <property type="project" value="PomBase"/>
</dbReference>
<dbReference type="GO" id="GO:1904541">
    <property type="term" value="P:fungal-type cell wall disassembly involved in conjugation with cellular fusion"/>
    <property type="evidence" value="ECO:0000316"/>
    <property type="project" value="PomBase"/>
</dbReference>
<dbReference type="CDD" id="cd11577">
    <property type="entry name" value="GH71"/>
    <property type="match status" value="1"/>
</dbReference>
<dbReference type="FunFam" id="3.20.20.80:FF:000268">
    <property type="entry name" value="Glucan endo-1,3-alpha-glucosidase agn2"/>
    <property type="match status" value="1"/>
</dbReference>
<dbReference type="Gene3D" id="3.20.20.80">
    <property type="entry name" value="Glycosidases"/>
    <property type="match status" value="1"/>
</dbReference>
<dbReference type="InterPro" id="IPR005197">
    <property type="entry name" value="Glyco_hydro_71"/>
</dbReference>
<dbReference type="Pfam" id="PF03659">
    <property type="entry name" value="Glyco_hydro_71"/>
    <property type="match status" value="1"/>
</dbReference>
<feature type="signal peptide" evidence="2">
    <location>
        <begin position="1"/>
        <end position="20"/>
    </location>
</feature>
<feature type="chain" id="PRO_0000012111" description="Glucan endo-1,3-alpha-glucosidase agn1">
    <location>
        <begin position="21"/>
        <end position="424"/>
    </location>
</feature>
<reference key="1">
    <citation type="journal article" date="2004" name="Mol. Biol. Cell">
        <title>Role of the alpha-glucanase Agn1p in fission-yeast cell separation.</title>
        <authorList>
            <person name="Dekker N."/>
            <person name="Speijer D."/>
            <person name="Grun C.H."/>
            <person name="Van Den Berg M."/>
            <person name="De Haan A."/>
            <person name="Hochstenbach F."/>
        </authorList>
    </citation>
    <scope>NUCLEOTIDE SEQUENCE [MRNA]</scope>
    <scope>FUNCTION</scope>
    <scope>SUBUNIT</scope>
    <scope>SUBCELLULAR LOCATION</scope>
    <source>
        <strain>972 / ATCC 24843</strain>
    </source>
</reference>
<reference key="2">
    <citation type="journal article" date="2002" name="Nature">
        <title>The genome sequence of Schizosaccharomyces pombe.</title>
        <authorList>
            <person name="Wood V."/>
            <person name="Gwilliam R."/>
            <person name="Rajandream M.A."/>
            <person name="Lyne M.H."/>
            <person name="Lyne R."/>
            <person name="Stewart A."/>
            <person name="Sgouros J.G."/>
            <person name="Peat N."/>
            <person name="Hayles J."/>
            <person name="Baker S.G."/>
            <person name="Basham D."/>
            <person name="Bowman S."/>
            <person name="Brooks K."/>
            <person name="Brown D."/>
            <person name="Brown S."/>
            <person name="Chillingworth T."/>
            <person name="Churcher C.M."/>
            <person name="Collins M."/>
            <person name="Connor R."/>
            <person name="Cronin A."/>
            <person name="Davis P."/>
            <person name="Feltwell T."/>
            <person name="Fraser A."/>
            <person name="Gentles S."/>
            <person name="Goble A."/>
            <person name="Hamlin N."/>
            <person name="Harris D.E."/>
            <person name="Hidalgo J."/>
            <person name="Hodgson G."/>
            <person name="Holroyd S."/>
            <person name="Hornsby T."/>
            <person name="Howarth S."/>
            <person name="Huckle E.J."/>
            <person name="Hunt S."/>
            <person name="Jagels K."/>
            <person name="James K.D."/>
            <person name="Jones L."/>
            <person name="Jones M."/>
            <person name="Leather S."/>
            <person name="McDonald S."/>
            <person name="McLean J."/>
            <person name="Mooney P."/>
            <person name="Moule S."/>
            <person name="Mungall K.L."/>
            <person name="Murphy L.D."/>
            <person name="Niblett D."/>
            <person name="Odell C."/>
            <person name="Oliver K."/>
            <person name="O'Neil S."/>
            <person name="Pearson D."/>
            <person name="Quail M.A."/>
            <person name="Rabbinowitsch E."/>
            <person name="Rutherford K.M."/>
            <person name="Rutter S."/>
            <person name="Saunders D."/>
            <person name="Seeger K."/>
            <person name="Sharp S."/>
            <person name="Skelton J."/>
            <person name="Simmonds M.N."/>
            <person name="Squares R."/>
            <person name="Squares S."/>
            <person name="Stevens K."/>
            <person name="Taylor K."/>
            <person name="Taylor R.G."/>
            <person name="Tivey A."/>
            <person name="Walsh S.V."/>
            <person name="Warren T."/>
            <person name="Whitehead S."/>
            <person name="Woodward J.R."/>
            <person name="Volckaert G."/>
            <person name="Aert R."/>
            <person name="Robben J."/>
            <person name="Grymonprez B."/>
            <person name="Weltjens I."/>
            <person name="Vanstreels E."/>
            <person name="Rieger M."/>
            <person name="Schaefer M."/>
            <person name="Mueller-Auer S."/>
            <person name="Gabel C."/>
            <person name="Fuchs M."/>
            <person name="Duesterhoeft A."/>
            <person name="Fritzc C."/>
            <person name="Holzer E."/>
            <person name="Moestl D."/>
            <person name="Hilbert H."/>
            <person name="Borzym K."/>
            <person name="Langer I."/>
            <person name="Beck A."/>
            <person name="Lehrach H."/>
            <person name="Reinhardt R."/>
            <person name="Pohl T.M."/>
            <person name="Eger P."/>
            <person name="Zimmermann W."/>
            <person name="Wedler H."/>
            <person name="Wambutt R."/>
            <person name="Purnelle B."/>
            <person name="Goffeau A."/>
            <person name="Cadieu E."/>
            <person name="Dreano S."/>
            <person name="Gloux S."/>
            <person name="Lelaure V."/>
            <person name="Mottier S."/>
            <person name="Galibert F."/>
            <person name="Aves S.J."/>
            <person name="Xiang Z."/>
            <person name="Hunt C."/>
            <person name="Moore K."/>
            <person name="Hurst S.M."/>
            <person name="Lucas M."/>
            <person name="Rochet M."/>
            <person name="Gaillardin C."/>
            <person name="Tallada V.A."/>
            <person name="Garzon A."/>
            <person name="Thode G."/>
            <person name="Daga R.R."/>
            <person name="Cruzado L."/>
            <person name="Jimenez J."/>
            <person name="Sanchez M."/>
            <person name="del Rey F."/>
            <person name="Benito J."/>
            <person name="Dominguez A."/>
            <person name="Revuelta J.L."/>
            <person name="Moreno S."/>
            <person name="Armstrong J."/>
            <person name="Forsburg S.L."/>
            <person name="Cerutti L."/>
            <person name="Lowe T."/>
            <person name="McCombie W.R."/>
            <person name="Paulsen I."/>
            <person name="Potashkin J."/>
            <person name="Shpakovski G.V."/>
            <person name="Ussery D."/>
            <person name="Barrell B.G."/>
            <person name="Nurse P."/>
        </authorList>
    </citation>
    <scope>NUCLEOTIDE SEQUENCE [LARGE SCALE GENOMIC DNA]</scope>
    <source>
        <strain>972 / ATCC 24843</strain>
    </source>
</reference>
<reference key="3">
    <citation type="journal article" date="2000" name="Genes Cells">
        <title>Large-scale screening of intracellular protein localization in living fission yeast cells by the use of a GFP-fusion genomic DNA library.</title>
        <authorList>
            <person name="Ding D.-Q."/>
            <person name="Tomita Y."/>
            <person name="Yamamoto A."/>
            <person name="Chikashige Y."/>
            <person name="Haraguchi T."/>
            <person name="Hiraoka Y."/>
        </authorList>
    </citation>
    <scope>NUCLEOTIDE SEQUENCE [LARGE SCALE GENOMIC DNA] OF 23-62</scope>
    <source>
        <strain>ATCC 38364 / 968</strain>
    </source>
</reference>
<sequence length="424" mass="46974">MKLVLFLVLLFSALINLTNADKMVVAHFIVGNTYPYTVSNWEEDIQDAIAVGIDGFALNMGSDAWQVERIEDAYDAAASVSSDFKLFISFDMSIISADADFIEGVVRRFADKPNQLYYDGKVFVSTFAGETDTFGYSDVSTGWDSAVKEPLASAGYPIYFVPSWTSLGQGALEESVADGFLSWNAWPTTDADMNDNDDIGYQNLANSLGKLYVAPVSPWFYTHLSYKNWAYKSDWLIIDRWNEMLSVQPDMIEVLTWNDYGESHYIGNIQGALPAGSEGYVDGFDHTAWRYLMSPYISAYKLGLSEPYINFESLFYWYRPTPKSATATADSLSYPSGGDYMEDEIFVLVYLLQSAEVTVTCGSTTQTFSGVPGVNQFTIPMETNASPSFTVARQGGTLASGTGPEIVDSLSIYNFNAYTGVLYF</sequence>
<evidence type="ECO:0000269" key="1">
    <source>
    </source>
</evidence>
<evidence type="ECO:0000305" key="2"/>
<evidence type="ECO:0000312" key="3">
    <source>
        <dbReference type="PomBase" id="SPAC14C4.09"/>
    </source>
</evidence>